<proteinExistence type="inferred from homology"/>
<comment type="function">
    <text evidence="1">Probably phosphorylates lipids; the in vivo substrate is unknown.</text>
</comment>
<comment type="cofactor">
    <cofactor evidence="1">
        <name>Mg(2+)</name>
        <dbReference type="ChEBI" id="CHEBI:18420"/>
    </cofactor>
    <cofactor evidence="1">
        <name>Ca(2+)</name>
        <dbReference type="ChEBI" id="CHEBI:29108"/>
    </cofactor>
    <text evidence="1">Binds 1 Mg(2+) ion per subunit. Ca(2+) may be able to substitute.</text>
</comment>
<comment type="subcellular location">
    <subcellularLocation>
        <location evidence="1">Cytoplasm</location>
    </subcellularLocation>
</comment>
<comment type="similarity">
    <text evidence="1">Belongs to the diacylglycerol/lipid kinase family. YegS lipid kinase subfamily.</text>
</comment>
<accession>Q5GVG9</accession>
<protein>
    <recommendedName>
        <fullName evidence="1">Probable lipid kinase YegS-like</fullName>
        <ecNumber evidence="1">2.7.1.-</ecNumber>
    </recommendedName>
</protein>
<sequence length="309" mass="32573">MAPSHWRLILNGKSTDNADLREAVGTLRKRGIQLDVRVTWEDGDAERYVSEAVADGVHTVVAAGGDGTLSEVAAALAHHERDAATLPSLGLVPLGTANDFATAANVPITPLDALTLIAERVAQPVDLLRIDAEHGPRWCANVASGGFGTQVTVETDEGLKKMLGGLAYLITGMSRLGRIDPIGARFNGPDFSWEGEFIALGLGNGRQAGGGQALCPEAVIDDGLLDVTIVPALDGEVAATLGTLVTGGKQAALERVAVRARVPWLEIVSNQPLTLNLDGEPETSRHFRIACVPARLRMHLPNDCPLLGR</sequence>
<feature type="chain" id="PRO_0000292168" description="Probable lipid kinase YegS-like">
    <location>
        <begin position="1"/>
        <end position="309"/>
    </location>
</feature>
<feature type="domain" description="DAGKc" evidence="1">
    <location>
        <begin position="1"/>
        <end position="134"/>
    </location>
</feature>
<feature type="active site" description="Proton acceptor" evidence="1">
    <location>
        <position position="280"/>
    </location>
</feature>
<feature type="binding site" evidence="1">
    <location>
        <position position="39"/>
    </location>
    <ligand>
        <name>ATP</name>
        <dbReference type="ChEBI" id="CHEBI:30616"/>
    </ligand>
</feature>
<feature type="binding site" evidence="1">
    <location>
        <begin position="65"/>
        <end position="71"/>
    </location>
    <ligand>
        <name>ATP</name>
        <dbReference type="ChEBI" id="CHEBI:30616"/>
    </ligand>
</feature>
<feature type="binding site" evidence="1">
    <location>
        <position position="96"/>
    </location>
    <ligand>
        <name>ATP</name>
        <dbReference type="ChEBI" id="CHEBI:30616"/>
    </ligand>
</feature>
<feature type="binding site" evidence="1">
    <location>
        <position position="219"/>
    </location>
    <ligand>
        <name>Mg(2+)</name>
        <dbReference type="ChEBI" id="CHEBI:18420"/>
    </ligand>
</feature>
<feature type="binding site" evidence="1">
    <location>
        <position position="222"/>
    </location>
    <ligand>
        <name>Mg(2+)</name>
        <dbReference type="ChEBI" id="CHEBI:18420"/>
    </ligand>
</feature>
<feature type="binding site" evidence="1">
    <location>
        <position position="224"/>
    </location>
    <ligand>
        <name>Mg(2+)</name>
        <dbReference type="ChEBI" id="CHEBI:18420"/>
    </ligand>
</feature>
<reference key="1">
    <citation type="journal article" date="2005" name="Nucleic Acids Res.">
        <title>The genome sequence of Xanthomonas oryzae pathovar oryzae KACC10331, the bacterial blight pathogen of rice.</title>
        <authorList>
            <person name="Lee B.-M."/>
            <person name="Park Y.-J."/>
            <person name="Park D.-S."/>
            <person name="Kang H.-W."/>
            <person name="Kim J.-G."/>
            <person name="Song E.-S."/>
            <person name="Park I.-C."/>
            <person name="Yoon U.-H."/>
            <person name="Hahn J.-H."/>
            <person name="Koo B.-S."/>
            <person name="Lee G.-B."/>
            <person name="Kim H."/>
            <person name="Park H.-S."/>
            <person name="Yoon K.-O."/>
            <person name="Kim J.-H."/>
            <person name="Jung C.-H."/>
            <person name="Koh N.-H."/>
            <person name="Seo J.-S."/>
            <person name="Go S.-J."/>
        </authorList>
    </citation>
    <scope>NUCLEOTIDE SEQUENCE [LARGE SCALE GENOMIC DNA]</scope>
    <source>
        <strain>KACC10331 / KXO85</strain>
    </source>
</reference>
<dbReference type="EC" id="2.7.1.-" evidence="1"/>
<dbReference type="EMBL" id="AE013598">
    <property type="protein sequence ID" value="AAW77304.1"/>
    <property type="molecule type" value="Genomic_DNA"/>
</dbReference>
<dbReference type="SMR" id="Q5GVG9"/>
<dbReference type="STRING" id="291331.XOO4050"/>
<dbReference type="KEGG" id="xoo:XOO4050"/>
<dbReference type="HOGENOM" id="CLU_045532_1_1_6"/>
<dbReference type="Proteomes" id="UP000006735">
    <property type="component" value="Chromosome"/>
</dbReference>
<dbReference type="GO" id="GO:0005737">
    <property type="term" value="C:cytoplasm"/>
    <property type="evidence" value="ECO:0007669"/>
    <property type="project" value="UniProtKB-SubCell"/>
</dbReference>
<dbReference type="GO" id="GO:0005886">
    <property type="term" value="C:plasma membrane"/>
    <property type="evidence" value="ECO:0007669"/>
    <property type="project" value="TreeGrafter"/>
</dbReference>
<dbReference type="GO" id="GO:0005524">
    <property type="term" value="F:ATP binding"/>
    <property type="evidence" value="ECO:0007669"/>
    <property type="project" value="UniProtKB-UniRule"/>
</dbReference>
<dbReference type="GO" id="GO:0001727">
    <property type="term" value="F:lipid kinase activity"/>
    <property type="evidence" value="ECO:0007669"/>
    <property type="project" value="UniProtKB-UniRule"/>
</dbReference>
<dbReference type="GO" id="GO:0000287">
    <property type="term" value="F:magnesium ion binding"/>
    <property type="evidence" value="ECO:0007669"/>
    <property type="project" value="UniProtKB-UniRule"/>
</dbReference>
<dbReference type="GO" id="GO:0008654">
    <property type="term" value="P:phospholipid biosynthetic process"/>
    <property type="evidence" value="ECO:0007669"/>
    <property type="project" value="UniProtKB-UniRule"/>
</dbReference>
<dbReference type="Gene3D" id="2.60.200.40">
    <property type="match status" value="1"/>
</dbReference>
<dbReference type="Gene3D" id="3.40.50.10330">
    <property type="entry name" value="Probable inorganic polyphosphate/atp-NAD kinase, domain 1"/>
    <property type="match status" value="1"/>
</dbReference>
<dbReference type="HAMAP" id="MF_01377">
    <property type="entry name" value="YegS"/>
    <property type="match status" value="1"/>
</dbReference>
<dbReference type="InterPro" id="IPR017438">
    <property type="entry name" value="ATP-NAD_kinase_N"/>
</dbReference>
<dbReference type="InterPro" id="IPR005218">
    <property type="entry name" value="Diacylglycerol/lipid_kinase"/>
</dbReference>
<dbReference type="InterPro" id="IPR001206">
    <property type="entry name" value="Diacylglycerol_kinase_cat_dom"/>
</dbReference>
<dbReference type="InterPro" id="IPR022433">
    <property type="entry name" value="Lip_kinase_YegS"/>
</dbReference>
<dbReference type="InterPro" id="IPR050187">
    <property type="entry name" value="Lipid_Phosphate_FormReg"/>
</dbReference>
<dbReference type="InterPro" id="IPR016064">
    <property type="entry name" value="NAD/diacylglycerol_kinase_sf"/>
</dbReference>
<dbReference type="InterPro" id="IPR045540">
    <property type="entry name" value="YegS/DAGK_C"/>
</dbReference>
<dbReference type="NCBIfam" id="TIGR03702">
    <property type="entry name" value="lip_kinase_YegS"/>
    <property type="match status" value="1"/>
</dbReference>
<dbReference type="NCBIfam" id="NF009602">
    <property type="entry name" value="PRK13054.1"/>
    <property type="match status" value="1"/>
</dbReference>
<dbReference type="NCBIfam" id="TIGR00147">
    <property type="entry name" value="YegS/Rv2252/BmrU family lipid kinase"/>
    <property type="match status" value="1"/>
</dbReference>
<dbReference type="PANTHER" id="PTHR12358:SF106">
    <property type="entry name" value="LIPID KINASE YEGS"/>
    <property type="match status" value="1"/>
</dbReference>
<dbReference type="PANTHER" id="PTHR12358">
    <property type="entry name" value="SPHINGOSINE KINASE"/>
    <property type="match status" value="1"/>
</dbReference>
<dbReference type="Pfam" id="PF00781">
    <property type="entry name" value="DAGK_cat"/>
    <property type="match status" value="1"/>
</dbReference>
<dbReference type="Pfam" id="PF19279">
    <property type="entry name" value="YegS_C"/>
    <property type="match status" value="1"/>
</dbReference>
<dbReference type="SMART" id="SM00046">
    <property type="entry name" value="DAGKc"/>
    <property type="match status" value="1"/>
</dbReference>
<dbReference type="SUPFAM" id="SSF111331">
    <property type="entry name" value="NAD kinase/diacylglycerol kinase-like"/>
    <property type="match status" value="1"/>
</dbReference>
<dbReference type="PROSITE" id="PS50146">
    <property type="entry name" value="DAGK"/>
    <property type="match status" value="1"/>
</dbReference>
<evidence type="ECO:0000255" key="1">
    <source>
        <dbReference type="HAMAP-Rule" id="MF_01377"/>
    </source>
</evidence>
<organism>
    <name type="scientific">Xanthomonas oryzae pv. oryzae (strain KACC10331 / KXO85)</name>
    <dbReference type="NCBI Taxonomy" id="291331"/>
    <lineage>
        <taxon>Bacteria</taxon>
        <taxon>Pseudomonadati</taxon>
        <taxon>Pseudomonadota</taxon>
        <taxon>Gammaproteobacteria</taxon>
        <taxon>Lysobacterales</taxon>
        <taxon>Lysobacteraceae</taxon>
        <taxon>Xanthomonas</taxon>
    </lineage>
</organism>
<name>YEGS_XANOR</name>
<keyword id="KW-0067">ATP-binding</keyword>
<keyword id="KW-0963">Cytoplasm</keyword>
<keyword id="KW-0418">Kinase</keyword>
<keyword id="KW-0444">Lipid biosynthesis</keyword>
<keyword id="KW-0443">Lipid metabolism</keyword>
<keyword id="KW-0460">Magnesium</keyword>
<keyword id="KW-0479">Metal-binding</keyword>
<keyword id="KW-0547">Nucleotide-binding</keyword>
<keyword id="KW-0594">Phospholipid biosynthesis</keyword>
<keyword id="KW-1208">Phospholipid metabolism</keyword>
<keyword id="KW-1185">Reference proteome</keyword>
<keyword id="KW-0808">Transferase</keyword>
<gene>
    <name type="ordered locus">XOO4050</name>
</gene>